<proteinExistence type="inferred from homology"/>
<accession>A9MH34</accession>
<feature type="signal peptide" evidence="1">
    <location>
        <begin position="1"/>
        <end position="29"/>
    </location>
</feature>
<feature type="chain" id="PRO_0000333064" description="N-acetylneuraminate epimerase">
    <location>
        <begin position="30"/>
        <end position="386"/>
    </location>
</feature>
<feature type="repeat" description="Kelch 1">
    <location>
        <begin position="51"/>
        <end position="95"/>
    </location>
</feature>
<feature type="repeat" description="Kelch 2">
    <location>
        <begin position="97"/>
        <end position="149"/>
    </location>
</feature>
<feature type="repeat" description="Kelch 3">
    <location>
        <begin position="151"/>
        <end position="186"/>
    </location>
</feature>
<feature type="repeat" description="Kelch 4">
    <location>
        <begin position="187"/>
        <end position="232"/>
    </location>
</feature>
<feature type="repeat" description="Kelch 5">
    <location>
        <begin position="235"/>
        <end position="284"/>
    </location>
</feature>
<feature type="repeat" description="Kelch 6">
    <location>
        <begin position="306"/>
        <end position="355"/>
    </location>
</feature>
<feature type="repeat" description="Kelch 7">
    <location>
        <begin position="357"/>
        <end position="386"/>
    </location>
</feature>
<feature type="active site" description="Proton acceptor" evidence="1">
    <location>
        <position position="241"/>
    </location>
</feature>
<sequence length="386" mass="42234">MGMQMKNSKKMMTLMALCLSVAITTSGYATTLPDIPEPLKNGTGAIDNNGVIYVGLGSAGTSWYKIDLKKQHKDWERIKSFPGGAREQSVSVFLNGELYVFGGVGKESNEAPLQVYSDVYKYTPAKNTWQKVNTISPVGLTGHTVVKLNETMALITGGVNEHIFDKYFIDIAAAAGDDSEKNRVIYNYFNKPSKDYFFNKIVFIYNAKENTWENAGELPGAGTAGSSSAMENNSLTLINGELKPGLRTDVIYRAIWDNDKLTWLKNSQLPPSPGEQHQEGLAGAFSGYSQGVLLVGGGANFPGAKQNYTDGKFYAHEGINKKWRDEVYGLINGHWQYVGKMKQPLGYGVSVNYGDEIFLIGGENAKGKPVSSVISFAMHDGKLLIE</sequence>
<gene>
    <name evidence="1" type="primary">nanM</name>
    <name type="ordered locus">SARI_01870</name>
</gene>
<comment type="function">
    <text evidence="1">Converts alpha-N-acetylneuranimic acid (Neu5Ac) to the beta-anomer, accelerating the equilibrium between the alpha- and beta-anomers. Probably facilitates sialidase-negative bacteria to compete successfully for limited amounts of extracellular Neu5Ac, which is likely taken up in the beta-anomer. In addition, the rapid removal of sialic acid from solution might be advantageous to the bacterium to damp down host responses.</text>
</comment>
<comment type="catalytic activity">
    <reaction evidence="1">
        <text>N-acetyl-alpha-neuraminate = N-acetyl-beta-neuraminate</text>
        <dbReference type="Rhea" id="RHEA:25233"/>
        <dbReference type="ChEBI" id="CHEBI:58705"/>
        <dbReference type="ChEBI" id="CHEBI:58770"/>
        <dbReference type="EC" id="5.1.3.24"/>
    </reaction>
</comment>
<comment type="subunit">
    <text evidence="1">Homodimer.</text>
</comment>
<comment type="subcellular location">
    <subcellularLocation>
        <location evidence="1">Periplasm</location>
    </subcellularLocation>
</comment>
<comment type="similarity">
    <text evidence="1">Belongs to the NanM family.</text>
</comment>
<organism>
    <name type="scientific">Salmonella arizonae (strain ATCC BAA-731 / CDC346-86 / RSK2980)</name>
    <dbReference type="NCBI Taxonomy" id="41514"/>
    <lineage>
        <taxon>Bacteria</taxon>
        <taxon>Pseudomonadati</taxon>
        <taxon>Pseudomonadota</taxon>
        <taxon>Gammaproteobacteria</taxon>
        <taxon>Enterobacterales</taxon>
        <taxon>Enterobacteriaceae</taxon>
        <taxon>Salmonella</taxon>
    </lineage>
</organism>
<dbReference type="EC" id="5.1.3.24" evidence="1"/>
<dbReference type="EMBL" id="CP000880">
    <property type="protein sequence ID" value="ABX21753.1"/>
    <property type="molecule type" value="Genomic_DNA"/>
</dbReference>
<dbReference type="SMR" id="A9MH34"/>
<dbReference type="STRING" id="41514.SARI_01870"/>
<dbReference type="KEGG" id="ses:SARI_01870"/>
<dbReference type="HOGENOM" id="CLU_061535_0_0_6"/>
<dbReference type="Proteomes" id="UP000002084">
    <property type="component" value="Chromosome"/>
</dbReference>
<dbReference type="GO" id="GO:0042597">
    <property type="term" value="C:periplasmic space"/>
    <property type="evidence" value="ECO:0007669"/>
    <property type="project" value="UniProtKB-SubCell"/>
</dbReference>
<dbReference type="GO" id="GO:0016857">
    <property type="term" value="F:racemase and epimerase activity, acting on carbohydrates and derivatives"/>
    <property type="evidence" value="ECO:0007669"/>
    <property type="project" value="UniProtKB-UniRule"/>
</dbReference>
<dbReference type="Gene3D" id="2.120.10.80">
    <property type="entry name" value="Kelch-type beta propeller"/>
    <property type="match status" value="2"/>
</dbReference>
<dbReference type="HAMAP" id="MF_01195">
    <property type="entry name" value="NanM"/>
    <property type="match status" value="1"/>
</dbReference>
<dbReference type="InterPro" id="IPR015915">
    <property type="entry name" value="Kelch-typ_b-propeller"/>
</dbReference>
<dbReference type="InterPro" id="IPR051746">
    <property type="entry name" value="Kelch_domain_containing_8"/>
</dbReference>
<dbReference type="InterPro" id="IPR056734">
    <property type="entry name" value="NANM"/>
</dbReference>
<dbReference type="InterPro" id="IPR019936">
    <property type="entry name" value="NanM_proteobact"/>
</dbReference>
<dbReference type="NCBIfam" id="TIGR03547">
    <property type="entry name" value="muta_rot_YjhT"/>
    <property type="match status" value="1"/>
</dbReference>
<dbReference type="NCBIfam" id="NF010730">
    <property type="entry name" value="PRK14131.1"/>
    <property type="match status" value="1"/>
</dbReference>
<dbReference type="PANTHER" id="PTHR46260">
    <property type="entry name" value="RING-TYPE DOMAIN-CONTAINING PROTEIN"/>
    <property type="match status" value="1"/>
</dbReference>
<dbReference type="PANTHER" id="PTHR46260:SF3">
    <property type="entry name" value="RING-TYPE DOMAIN-CONTAINING PROTEIN"/>
    <property type="match status" value="1"/>
</dbReference>
<dbReference type="Pfam" id="PF24996">
    <property type="entry name" value="NANM"/>
    <property type="match status" value="1"/>
</dbReference>
<dbReference type="SUPFAM" id="SSF117281">
    <property type="entry name" value="Kelch motif"/>
    <property type="match status" value="2"/>
</dbReference>
<protein>
    <recommendedName>
        <fullName evidence="1">N-acetylneuraminate epimerase</fullName>
        <ecNumber evidence="1">5.1.3.24</ecNumber>
    </recommendedName>
    <alternativeName>
        <fullName evidence="1">N-acetylneuraminate mutarotase</fullName>
        <shortName evidence="1">Neu5Ac mutarotase</shortName>
    </alternativeName>
    <alternativeName>
        <fullName evidence="1">Sialic acid epimerase</fullName>
    </alternativeName>
</protein>
<reference key="1">
    <citation type="submission" date="2007-11" db="EMBL/GenBank/DDBJ databases">
        <authorList>
            <consortium name="The Salmonella enterica serovar Arizonae Genome Sequencing Project"/>
            <person name="McClelland M."/>
            <person name="Sanderson E.K."/>
            <person name="Porwollik S."/>
            <person name="Spieth J."/>
            <person name="Clifton W.S."/>
            <person name="Fulton R."/>
            <person name="Chunyan W."/>
            <person name="Wollam A."/>
            <person name="Shah N."/>
            <person name="Pepin K."/>
            <person name="Bhonagiri V."/>
            <person name="Nash W."/>
            <person name="Johnson M."/>
            <person name="Thiruvilangam P."/>
            <person name="Wilson R."/>
        </authorList>
    </citation>
    <scope>NUCLEOTIDE SEQUENCE [LARGE SCALE GENOMIC DNA]</scope>
    <source>
        <strain>ATCC BAA-731 / CDC346-86 / RSK2980</strain>
    </source>
</reference>
<keyword id="KW-0119">Carbohydrate metabolism</keyword>
<keyword id="KW-0413">Isomerase</keyword>
<keyword id="KW-0880">Kelch repeat</keyword>
<keyword id="KW-0574">Periplasm</keyword>
<keyword id="KW-1185">Reference proteome</keyword>
<keyword id="KW-0677">Repeat</keyword>
<keyword id="KW-0732">Signal</keyword>
<name>NANM_SALAR</name>
<evidence type="ECO:0000255" key="1">
    <source>
        <dbReference type="HAMAP-Rule" id="MF_01195"/>
    </source>
</evidence>